<proteinExistence type="inferred from homology"/>
<reference key="1">
    <citation type="journal article" date="2007" name="PLoS ONE">
        <title>Analysis of the neurotoxin complex genes in Clostridium botulinum A1-A4 and B1 strains: BoNT/A3, /Ba4 and /B1 clusters are located within plasmids.</title>
        <authorList>
            <person name="Smith T.J."/>
            <person name="Hill K.K."/>
            <person name="Foley B.T."/>
            <person name="Detter J.C."/>
            <person name="Munk A.C."/>
            <person name="Bruce D.C."/>
            <person name="Doggett N.A."/>
            <person name="Smith L.A."/>
            <person name="Marks J.D."/>
            <person name="Xie G."/>
            <person name="Brettin T.S."/>
        </authorList>
    </citation>
    <scope>NUCLEOTIDE SEQUENCE [LARGE SCALE GENOMIC DNA]</scope>
    <source>
        <strain>Okra / Type B1</strain>
    </source>
</reference>
<evidence type="ECO:0000255" key="1">
    <source>
        <dbReference type="HAMAP-Rule" id="MF_00360"/>
    </source>
</evidence>
<evidence type="ECO:0000305" key="2"/>
<protein>
    <recommendedName>
        <fullName evidence="1">Small ribosomal subunit protein bS6</fullName>
    </recommendedName>
    <alternativeName>
        <fullName evidence="2">30S ribosomal protein S6</fullName>
    </alternativeName>
</protein>
<gene>
    <name evidence="1" type="primary">rpsF</name>
    <name type="ordered locus">CLD_0846</name>
</gene>
<accession>B1IHQ4</accession>
<organism>
    <name type="scientific">Clostridium botulinum (strain Okra / Type B1)</name>
    <dbReference type="NCBI Taxonomy" id="498213"/>
    <lineage>
        <taxon>Bacteria</taxon>
        <taxon>Bacillati</taxon>
        <taxon>Bacillota</taxon>
        <taxon>Clostridia</taxon>
        <taxon>Eubacteriales</taxon>
        <taxon>Clostridiaceae</taxon>
        <taxon>Clostridium</taxon>
    </lineage>
</organism>
<name>RS6_CLOBK</name>
<dbReference type="EMBL" id="CP000939">
    <property type="protein sequence ID" value="ACA44622.1"/>
    <property type="molecule type" value="Genomic_DNA"/>
</dbReference>
<dbReference type="RefSeq" id="WP_003359427.1">
    <property type="nucleotide sequence ID" value="NC_010516.1"/>
</dbReference>
<dbReference type="SMR" id="B1IHQ4"/>
<dbReference type="KEGG" id="cbb:CLD_0846"/>
<dbReference type="HOGENOM" id="CLU_113441_5_1_9"/>
<dbReference type="Proteomes" id="UP000008541">
    <property type="component" value="Chromosome"/>
</dbReference>
<dbReference type="GO" id="GO:0005737">
    <property type="term" value="C:cytoplasm"/>
    <property type="evidence" value="ECO:0007669"/>
    <property type="project" value="UniProtKB-ARBA"/>
</dbReference>
<dbReference type="GO" id="GO:1990904">
    <property type="term" value="C:ribonucleoprotein complex"/>
    <property type="evidence" value="ECO:0007669"/>
    <property type="project" value="UniProtKB-KW"/>
</dbReference>
<dbReference type="GO" id="GO:0005840">
    <property type="term" value="C:ribosome"/>
    <property type="evidence" value="ECO:0007669"/>
    <property type="project" value="UniProtKB-KW"/>
</dbReference>
<dbReference type="GO" id="GO:0070181">
    <property type="term" value="F:small ribosomal subunit rRNA binding"/>
    <property type="evidence" value="ECO:0007669"/>
    <property type="project" value="TreeGrafter"/>
</dbReference>
<dbReference type="GO" id="GO:0003735">
    <property type="term" value="F:structural constituent of ribosome"/>
    <property type="evidence" value="ECO:0007669"/>
    <property type="project" value="InterPro"/>
</dbReference>
<dbReference type="GO" id="GO:0006412">
    <property type="term" value="P:translation"/>
    <property type="evidence" value="ECO:0007669"/>
    <property type="project" value="UniProtKB-UniRule"/>
</dbReference>
<dbReference type="CDD" id="cd00473">
    <property type="entry name" value="bS6"/>
    <property type="match status" value="1"/>
</dbReference>
<dbReference type="FunFam" id="3.30.70.60:FF:000002">
    <property type="entry name" value="30S ribosomal protein S6"/>
    <property type="match status" value="1"/>
</dbReference>
<dbReference type="Gene3D" id="3.30.70.60">
    <property type="match status" value="1"/>
</dbReference>
<dbReference type="HAMAP" id="MF_00360">
    <property type="entry name" value="Ribosomal_bS6"/>
    <property type="match status" value="1"/>
</dbReference>
<dbReference type="InterPro" id="IPR000529">
    <property type="entry name" value="Ribosomal_bS6"/>
</dbReference>
<dbReference type="InterPro" id="IPR035980">
    <property type="entry name" value="Ribosomal_bS6_sf"/>
</dbReference>
<dbReference type="InterPro" id="IPR020814">
    <property type="entry name" value="Ribosomal_S6_plastid/chlpt"/>
</dbReference>
<dbReference type="InterPro" id="IPR014717">
    <property type="entry name" value="Transl_elong_EF1B/ribsomal_bS6"/>
</dbReference>
<dbReference type="NCBIfam" id="TIGR00166">
    <property type="entry name" value="S6"/>
    <property type="match status" value="1"/>
</dbReference>
<dbReference type="PANTHER" id="PTHR21011">
    <property type="entry name" value="MITOCHONDRIAL 28S RIBOSOMAL PROTEIN S6"/>
    <property type="match status" value="1"/>
</dbReference>
<dbReference type="PANTHER" id="PTHR21011:SF1">
    <property type="entry name" value="SMALL RIBOSOMAL SUBUNIT PROTEIN BS6M"/>
    <property type="match status" value="1"/>
</dbReference>
<dbReference type="Pfam" id="PF01250">
    <property type="entry name" value="Ribosomal_S6"/>
    <property type="match status" value="1"/>
</dbReference>
<dbReference type="SUPFAM" id="SSF54995">
    <property type="entry name" value="Ribosomal protein S6"/>
    <property type="match status" value="1"/>
</dbReference>
<keyword id="KW-0687">Ribonucleoprotein</keyword>
<keyword id="KW-0689">Ribosomal protein</keyword>
<keyword id="KW-0694">RNA-binding</keyword>
<keyword id="KW-0699">rRNA-binding</keyword>
<comment type="function">
    <text evidence="1">Binds together with bS18 to 16S ribosomal RNA.</text>
</comment>
<comment type="similarity">
    <text evidence="1">Belongs to the bacterial ribosomal protein bS6 family.</text>
</comment>
<sequence>MRKYETVFILNPALDEEGYKANVEKFKGVIENAGGTVDNVDLWGKRKLAYEVKKVSEGYYTLMNFTADTELPKELDRVFRITDTVIRHMIITQE</sequence>
<feature type="chain" id="PRO_1000120728" description="Small ribosomal subunit protein bS6">
    <location>
        <begin position="1"/>
        <end position="94"/>
    </location>
</feature>